<evidence type="ECO:0000250" key="1">
    <source>
        <dbReference type="UniProtKB" id="P41734"/>
    </source>
</evidence>
<evidence type="ECO:0000255" key="2"/>
<evidence type="ECO:0000256" key="3">
    <source>
        <dbReference type="SAM" id="MobiDB-lite"/>
    </source>
</evidence>
<evidence type="ECO:0000269" key="4">
    <source>
    </source>
</evidence>
<evidence type="ECO:0000305" key="5"/>
<evidence type="ECO:0000312" key="6">
    <source>
        <dbReference type="EMBL" id="CCP43826.1"/>
    </source>
</evidence>
<sequence>MPRRSTIALATAGALASTGTAYLGARNLLVGQATHARTVIPKSFDAPPRADGVYTRGGGPVQRWRREVPFDVHLMIFGDSTATGYGCASAEEVPGVLIARGLAEQTGKRIRLSTKAIVGATSKGVCGQVDAMFVVGPPPDAAVIMIGANDITALNGIGPSAQRLADCVRRLRTRGAVVVVGTCPDLGVITAIPQPLRALAHTRGVRLARAQTAAVKAAGGVPVPLGHLLAPKFRAMPELMFSADRYHPSAPAYALAADLLFLALRDALTEKLDIPIHETPSRPGTATLEPGHTRHSMMSRLRRPRPARAVPTGG</sequence>
<feature type="signal peptide" evidence="2">
    <location>
        <begin position="1"/>
        <end position="21"/>
    </location>
</feature>
<feature type="chain" id="PRO_0000448307" description="GDSL-like esterase Rv1075c">
    <location>
        <begin position="22"/>
        <end position="314"/>
    </location>
</feature>
<feature type="region of interest" description="Disordered" evidence="3">
    <location>
        <begin position="276"/>
        <end position="314"/>
    </location>
</feature>
<feature type="compositionally biased region" description="Basic residues" evidence="3">
    <location>
        <begin position="293"/>
        <end position="306"/>
    </location>
</feature>
<feature type="active site" description="Nucleophile" evidence="1">
    <location>
        <position position="80"/>
    </location>
</feature>
<feature type="active site" description="Proton donor" evidence="1">
    <location>
        <position position="244"/>
    </location>
</feature>
<feature type="active site" description="Proton acceptor" evidence="1">
    <location>
        <position position="247"/>
    </location>
</feature>
<feature type="site" description="Transition state stabilizer" evidence="1">
    <location>
        <position position="119"/>
    </location>
</feature>
<feature type="site" description="Transition state stabilizer" evidence="1">
    <location>
        <position position="149"/>
    </location>
</feature>
<feature type="mutagenesis site" description="Strong decrease in activity." evidence="4">
    <original>S</original>
    <variation>A</variation>
    <location>
        <position position="80"/>
    </location>
</feature>
<feature type="mutagenesis site" description="Strong decrease in activity." evidence="4">
    <original>D</original>
    <variation>A</variation>
    <location>
        <position position="244"/>
    </location>
</feature>
<feature type="mutagenesis site" description="Strong decrease in activity." evidence="4">
    <original>H</original>
    <variation>A</variation>
    <location>
        <position position="247"/>
    </location>
</feature>
<protein>
    <recommendedName>
        <fullName evidence="5">GDSL-like esterase Rv1075c</fullName>
        <ecNumber evidence="4">3.1.-.-</ecNumber>
    </recommendedName>
    <alternativeName>
        <fullName evidence="5">Acetylesterase</fullName>
        <ecNumber evidence="4">3.1.1.6</ecNumber>
    </alternativeName>
</protein>
<accession>O53423</accession>
<accession>I6X087</accession>
<accession>L0T5R9</accession>
<gene>
    <name evidence="6" type="ordered locus">Rv1075c</name>
</gene>
<comment type="function">
    <text evidence="4">Esterase that preferentially hydrolyzes short-chain fatty acids, particularly pNP-acetate (C2) and pNP-butyrate (C4). Also has weak activity with pNP-hexanoate (C6) and pNP-octanoate (C8). It can also hydrolyze short-chain tryglycerides such as triacetin and tributyrin (PubMed:31001637). Important for intracellular survival (PubMed:31001637).</text>
</comment>
<comment type="catalytic activity">
    <reaction evidence="4">
        <text>an acetyl ester + H2O = an aliphatic alcohol + acetate + H(+)</text>
        <dbReference type="Rhea" id="RHEA:12957"/>
        <dbReference type="ChEBI" id="CHEBI:2571"/>
        <dbReference type="ChEBI" id="CHEBI:15377"/>
        <dbReference type="ChEBI" id="CHEBI:15378"/>
        <dbReference type="ChEBI" id="CHEBI:30089"/>
        <dbReference type="ChEBI" id="CHEBI:47622"/>
        <dbReference type="EC" id="3.1.1.6"/>
    </reaction>
</comment>
<comment type="catalytic activity">
    <reaction evidence="4">
        <text>a butanoate ester + H2O = an aliphatic alcohol + butanoate + H(+)</text>
        <dbReference type="Rhea" id="RHEA:47348"/>
        <dbReference type="ChEBI" id="CHEBI:2571"/>
        <dbReference type="ChEBI" id="CHEBI:15377"/>
        <dbReference type="ChEBI" id="CHEBI:15378"/>
        <dbReference type="ChEBI" id="CHEBI:17968"/>
        <dbReference type="ChEBI" id="CHEBI:50477"/>
    </reaction>
</comment>
<comment type="catalytic activity">
    <reaction evidence="4">
        <text>triacetin + H2O = diacetylglycerol + acetate + H(+)</text>
        <dbReference type="Rhea" id="RHEA:48028"/>
        <dbReference type="ChEBI" id="CHEBI:9661"/>
        <dbReference type="ChEBI" id="CHEBI:15377"/>
        <dbReference type="ChEBI" id="CHEBI:15378"/>
        <dbReference type="ChEBI" id="CHEBI:30089"/>
        <dbReference type="ChEBI" id="CHEBI:88156"/>
    </reaction>
</comment>
<comment type="catalytic activity">
    <reaction evidence="4">
        <text>1,2,3-tributanoylglycerol + H2O = dibutanoylglycerol + butanoate + H(+)</text>
        <dbReference type="Rhea" id="RHEA:40475"/>
        <dbReference type="ChEBI" id="CHEBI:15377"/>
        <dbReference type="ChEBI" id="CHEBI:15378"/>
        <dbReference type="ChEBI" id="CHEBI:17968"/>
        <dbReference type="ChEBI" id="CHEBI:35020"/>
        <dbReference type="ChEBI" id="CHEBI:76478"/>
    </reaction>
</comment>
<comment type="activity regulation">
    <text evidence="4">Esterase activity is significantly inhibited by the serine modifier phenylmethylsulfonyl fluoride (PMSF). Completely inhibited by diethyl pyrocarbonate.</text>
</comment>
<comment type="biophysicochemical properties">
    <kinetics>
        <KM evidence="4">753 uM for pNP-acetate</KM>
    </kinetics>
    <phDependence>
        <text evidence="4">Optimum pH is 9.0 (with pNP-acetate as substrate).</text>
    </phDependence>
    <temperatureDependence>
        <text evidence="4">Optimum temperature is 45 degrees Celsius (with pNP-acetate as substrate).</text>
    </temperatureDependence>
</comment>
<comment type="induction">
    <text evidence="4">Induced under acidic conditions.</text>
</comment>
<comment type="disruption phenotype">
    <text evidence="4">Disruption of the gene leads to significantly reduced bacterial growth in macrophages and in mice.</text>
</comment>
<comment type="similarity">
    <text evidence="5">Belongs to the 'GDSL' lipolytic enzyme family.</text>
</comment>
<organism>
    <name type="scientific">Mycobacterium tuberculosis (strain ATCC 25618 / H37Rv)</name>
    <dbReference type="NCBI Taxonomy" id="83332"/>
    <lineage>
        <taxon>Bacteria</taxon>
        <taxon>Bacillati</taxon>
        <taxon>Actinomycetota</taxon>
        <taxon>Actinomycetes</taxon>
        <taxon>Mycobacteriales</taxon>
        <taxon>Mycobacteriaceae</taxon>
        <taxon>Mycobacterium</taxon>
        <taxon>Mycobacterium tuberculosis complex</taxon>
    </lineage>
</organism>
<dbReference type="EC" id="3.1.-.-" evidence="4"/>
<dbReference type="EC" id="3.1.1.6" evidence="4"/>
<dbReference type="EMBL" id="AL123456">
    <property type="protein sequence ID" value="CCP43826.1"/>
    <property type="molecule type" value="Genomic_DNA"/>
</dbReference>
<dbReference type="RefSeq" id="NP_215591.1">
    <property type="nucleotide sequence ID" value="NC_000962.3"/>
</dbReference>
<dbReference type="RefSeq" id="WP_003405726.1">
    <property type="nucleotide sequence ID" value="NZ_NVQJ01000072.1"/>
</dbReference>
<dbReference type="STRING" id="83332.Rv1075c"/>
<dbReference type="PaxDb" id="83332-Rv1075c"/>
<dbReference type="DNASU" id="887110"/>
<dbReference type="GeneID" id="887110"/>
<dbReference type="KEGG" id="mtu:Rv1075c"/>
<dbReference type="KEGG" id="mtv:RVBD_1075c"/>
<dbReference type="PATRIC" id="fig|83332.111.peg.1197"/>
<dbReference type="TubercuList" id="Rv1075c"/>
<dbReference type="eggNOG" id="COG2755">
    <property type="taxonomic scope" value="Bacteria"/>
</dbReference>
<dbReference type="InParanoid" id="O53423"/>
<dbReference type="OrthoDB" id="9804395at2"/>
<dbReference type="PhylomeDB" id="O53423"/>
<dbReference type="Proteomes" id="UP000001584">
    <property type="component" value="Chromosome"/>
</dbReference>
<dbReference type="GO" id="GO:0009274">
    <property type="term" value="C:peptidoglycan-based cell wall"/>
    <property type="evidence" value="ECO:0007005"/>
    <property type="project" value="MTBBASE"/>
</dbReference>
<dbReference type="GO" id="GO:0005886">
    <property type="term" value="C:plasma membrane"/>
    <property type="evidence" value="ECO:0007005"/>
    <property type="project" value="MTBBASE"/>
</dbReference>
<dbReference type="GO" id="GO:0008126">
    <property type="term" value="F:acetylesterase activity"/>
    <property type="evidence" value="ECO:0007669"/>
    <property type="project" value="UniProtKB-EC"/>
</dbReference>
<dbReference type="GO" id="GO:0004622">
    <property type="term" value="F:lysophospholipase activity"/>
    <property type="evidence" value="ECO:0000318"/>
    <property type="project" value="GO_Central"/>
</dbReference>
<dbReference type="CDD" id="cd01836">
    <property type="entry name" value="FeeA_FeeB_like"/>
    <property type="match status" value="1"/>
</dbReference>
<dbReference type="FunFam" id="3.40.50.1110:FF:000015">
    <property type="entry name" value="GDSL family lipase"/>
    <property type="match status" value="1"/>
</dbReference>
<dbReference type="Gene3D" id="3.40.50.1110">
    <property type="entry name" value="SGNH hydrolase"/>
    <property type="match status" value="1"/>
</dbReference>
<dbReference type="InterPro" id="IPR051532">
    <property type="entry name" value="Ester_Hydrolysis_Enzymes"/>
</dbReference>
<dbReference type="InterPro" id="IPR013830">
    <property type="entry name" value="SGNH_hydro"/>
</dbReference>
<dbReference type="InterPro" id="IPR036514">
    <property type="entry name" value="SGNH_hydro_sf"/>
</dbReference>
<dbReference type="PANTHER" id="PTHR30383:SF5">
    <property type="entry name" value="SGNH HYDROLASE-TYPE ESTERASE DOMAIN-CONTAINING PROTEIN"/>
    <property type="match status" value="1"/>
</dbReference>
<dbReference type="PANTHER" id="PTHR30383">
    <property type="entry name" value="THIOESTERASE 1/PROTEASE 1/LYSOPHOSPHOLIPASE L1"/>
    <property type="match status" value="1"/>
</dbReference>
<dbReference type="Pfam" id="PF13472">
    <property type="entry name" value="Lipase_GDSL_2"/>
    <property type="match status" value="1"/>
</dbReference>
<dbReference type="SUPFAM" id="SSF52266">
    <property type="entry name" value="SGNH hydrolase"/>
    <property type="match status" value="1"/>
</dbReference>
<reference key="1">
    <citation type="journal article" date="1998" name="Nature">
        <title>Deciphering the biology of Mycobacterium tuberculosis from the complete genome sequence.</title>
        <authorList>
            <person name="Cole S.T."/>
            <person name="Brosch R."/>
            <person name="Parkhill J."/>
            <person name="Garnier T."/>
            <person name="Churcher C.M."/>
            <person name="Harris D.E."/>
            <person name="Gordon S.V."/>
            <person name="Eiglmeier K."/>
            <person name="Gas S."/>
            <person name="Barry C.E. III"/>
            <person name="Tekaia F."/>
            <person name="Badcock K."/>
            <person name="Basham D."/>
            <person name="Brown D."/>
            <person name="Chillingworth T."/>
            <person name="Connor R."/>
            <person name="Davies R.M."/>
            <person name="Devlin K."/>
            <person name="Feltwell T."/>
            <person name="Gentles S."/>
            <person name="Hamlin N."/>
            <person name="Holroyd S."/>
            <person name="Hornsby T."/>
            <person name="Jagels K."/>
            <person name="Krogh A."/>
            <person name="McLean J."/>
            <person name="Moule S."/>
            <person name="Murphy L.D."/>
            <person name="Oliver S."/>
            <person name="Osborne J."/>
            <person name="Quail M.A."/>
            <person name="Rajandream M.A."/>
            <person name="Rogers J."/>
            <person name="Rutter S."/>
            <person name="Seeger K."/>
            <person name="Skelton S."/>
            <person name="Squares S."/>
            <person name="Squares R."/>
            <person name="Sulston J.E."/>
            <person name="Taylor K."/>
            <person name="Whitehead S."/>
            <person name="Barrell B.G."/>
        </authorList>
    </citation>
    <scope>NUCLEOTIDE SEQUENCE [LARGE SCALE GENOMIC DNA]</scope>
    <source>
        <strain>ATCC 25618 / H37Rv</strain>
    </source>
</reference>
<reference key="2">
    <citation type="journal article" date="2019" name="J. Infect. Dis.">
        <title>Rv1075c of Mycobacterium tuberculosis is a GDSL-like esterase and is important for intracellular survival.</title>
        <authorList>
            <person name="Yang D."/>
            <person name="He X."/>
            <person name="Li S."/>
            <person name="Liu J."/>
            <person name="Stabenow J."/>
            <person name="Zalduondo L."/>
            <person name="White S."/>
            <person name="Kong Y."/>
        </authorList>
    </citation>
    <scope>FUNCTION</scope>
    <scope>CATALYTIC ACTIVITY</scope>
    <scope>ACTIVITY REGULATION</scope>
    <scope>BIOPHYSICOCHEMICAL PROPERTIES</scope>
    <scope>INDUCTION</scope>
    <scope>DISRUPTION PHENOTYPE</scope>
    <scope>MUTAGENESIS OF SER-80; ASP-244 AND HIS-247</scope>
    <source>
        <strain>CDC 1551 / Oshkosh</strain>
        <strain>H37Rv</strain>
    </source>
</reference>
<name>GDSLL_MYCTU</name>
<keyword id="KW-0378">Hydrolase</keyword>
<keyword id="KW-1185">Reference proteome</keyword>
<keyword id="KW-0719">Serine esterase</keyword>
<keyword id="KW-0732">Signal</keyword>
<proteinExistence type="evidence at protein level"/>